<keyword id="KW-1003">Cell membrane</keyword>
<keyword id="KW-0472">Membrane</keyword>
<keyword id="KW-0677">Repeat</keyword>
<keyword id="KW-0812">Transmembrane</keyword>
<keyword id="KW-1133">Transmembrane helix</keyword>
<keyword id="KW-0813">Transport</keyword>
<gene>
    <name evidence="1" type="primary">ybjL</name>
    <name type="ordered locus">EcHS_A0950</name>
</gene>
<protein>
    <recommendedName>
        <fullName evidence="1">Putative transport protein YbjL</fullName>
    </recommendedName>
</protein>
<name>YBJL_ECOHS</name>
<feature type="chain" id="PRO_0000329145" description="Putative transport protein YbjL">
    <location>
        <begin position="1"/>
        <end position="561"/>
    </location>
</feature>
<feature type="transmembrane region" description="Helical" evidence="1">
    <location>
        <begin position="8"/>
        <end position="28"/>
    </location>
</feature>
<feature type="transmembrane region" description="Helical" evidence="1">
    <location>
        <begin position="32"/>
        <end position="52"/>
    </location>
</feature>
<feature type="transmembrane region" description="Helical" evidence="1">
    <location>
        <begin position="66"/>
        <end position="86"/>
    </location>
</feature>
<feature type="transmembrane region" description="Helical" evidence="1">
    <location>
        <begin position="94"/>
        <end position="114"/>
    </location>
</feature>
<feature type="transmembrane region" description="Helical" evidence="1">
    <location>
        <begin position="158"/>
        <end position="178"/>
    </location>
</feature>
<feature type="transmembrane region" description="Helical" evidence="1">
    <location>
        <begin position="383"/>
        <end position="403"/>
    </location>
</feature>
<feature type="transmembrane region" description="Helical" evidence="1">
    <location>
        <begin position="406"/>
        <end position="426"/>
    </location>
</feature>
<feature type="transmembrane region" description="Helical" evidence="1">
    <location>
        <begin position="451"/>
        <end position="471"/>
    </location>
</feature>
<feature type="transmembrane region" description="Helical" evidence="1">
    <location>
        <begin position="475"/>
        <end position="495"/>
    </location>
</feature>
<feature type="transmembrane region" description="Helical" evidence="1">
    <location>
        <begin position="540"/>
        <end position="560"/>
    </location>
</feature>
<feature type="domain" description="RCK C-terminal 1" evidence="1">
    <location>
        <begin position="200"/>
        <end position="288"/>
    </location>
</feature>
<feature type="domain" description="RCK C-terminal 2" evidence="1">
    <location>
        <begin position="292"/>
        <end position="373"/>
    </location>
</feature>
<comment type="subcellular location">
    <subcellularLocation>
        <location evidence="1">Cell membrane</location>
        <topology evidence="1">Multi-pass membrane protein</topology>
    </subcellularLocation>
</comment>
<comment type="similarity">
    <text evidence="1">Belongs to the AAE transporter (TC 2.A.81) family. YbjL subfamily.</text>
</comment>
<sequence>MNINVAELLNGNYILLLFVVLALGLCLGKLRLGSIQLGNSIGVLVVSLLLGQQHFSINTDALNLGFMLFIFCVGVEAGPNFFSIFFRDGKNYLMLALVMVGSALVIALGLGKLFGWDIGLTAGMLAGSMTSTPVLVGAGDTLRHSGMESRQLSLALDNLSLGYALTYLIGLVSLIVGARYLPKLQHQDLQTSAQQIARERGLDTDANRKVYLPVIRAYRVGPELVAWTDGKNLRELGIYRQTGCYIERIRRNGILANPDGDAVLQMGDEIALVGYPDAHARLDPSFRNGKEVFDRDLLDMRIVTEEVVVKNHNAVGKRLAQLKLTDHGCFLNRVIRSQIEMPIDDNVVLNKGDVLQVSGDARRVKTIADRIGFISIHSQVTDLLAFCAFFVIGLMIGMITFQFSTFSFGMGNAAGLLFAGIMLGFMRANHPTFGYIPQGALSMVKEFGLMVFMAGVGLSAGSGINNGLGAIGGQMLIAGLIVSLVPVVICFLFGAYVLRMNRALLFGAMMGARTCAPAMEIISDTARSNIPALGYAGTYAIANVLLTLAGTIIVMVWPGLG</sequence>
<evidence type="ECO:0000255" key="1">
    <source>
        <dbReference type="HAMAP-Rule" id="MF_01015"/>
    </source>
</evidence>
<accession>A7ZYF0</accession>
<proteinExistence type="inferred from homology"/>
<reference key="1">
    <citation type="journal article" date="2008" name="J. Bacteriol.">
        <title>The pangenome structure of Escherichia coli: comparative genomic analysis of E. coli commensal and pathogenic isolates.</title>
        <authorList>
            <person name="Rasko D.A."/>
            <person name="Rosovitz M.J."/>
            <person name="Myers G.S.A."/>
            <person name="Mongodin E.F."/>
            <person name="Fricke W.F."/>
            <person name="Gajer P."/>
            <person name="Crabtree J."/>
            <person name="Sebaihia M."/>
            <person name="Thomson N.R."/>
            <person name="Chaudhuri R."/>
            <person name="Henderson I.R."/>
            <person name="Sperandio V."/>
            <person name="Ravel J."/>
        </authorList>
    </citation>
    <scope>NUCLEOTIDE SEQUENCE [LARGE SCALE GENOMIC DNA]</scope>
    <source>
        <strain>HS</strain>
    </source>
</reference>
<organism>
    <name type="scientific">Escherichia coli O9:H4 (strain HS)</name>
    <dbReference type="NCBI Taxonomy" id="331112"/>
    <lineage>
        <taxon>Bacteria</taxon>
        <taxon>Pseudomonadati</taxon>
        <taxon>Pseudomonadota</taxon>
        <taxon>Gammaproteobacteria</taxon>
        <taxon>Enterobacterales</taxon>
        <taxon>Enterobacteriaceae</taxon>
        <taxon>Escherichia</taxon>
    </lineage>
</organism>
<dbReference type="EMBL" id="CP000802">
    <property type="protein sequence ID" value="ABV05304.1"/>
    <property type="molecule type" value="Genomic_DNA"/>
</dbReference>
<dbReference type="RefSeq" id="WP_001024876.1">
    <property type="nucleotide sequence ID" value="NC_009800.1"/>
</dbReference>
<dbReference type="SMR" id="A7ZYF0"/>
<dbReference type="KEGG" id="ecx:EcHS_A0950"/>
<dbReference type="HOGENOM" id="CLU_035023_2_2_6"/>
<dbReference type="GO" id="GO:0005886">
    <property type="term" value="C:plasma membrane"/>
    <property type="evidence" value="ECO:0007669"/>
    <property type="project" value="UniProtKB-SubCell"/>
</dbReference>
<dbReference type="GO" id="GO:0008324">
    <property type="term" value="F:monoatomic cation transmembrane transporter activity"/>
    <property type="evidence" value="ECO:0007669"/>
    <property type="project" value="InterPro"/>
</dbReference>
<dbReference type="GO" id="GO:0006813">
    <property type="term" value="P:potassium ion transport"/>
    <property type="evidence" value="ECO:0007669"/>
    <property type="project" value="InterPro"/>
</dbReference>
<dbReference type="FunFam" id="3.30.70.1450:FF:000003">
    <property type="entry name" value="Putative transport protein YbjL"/>
    <property type="match status" value="1"/>
</dbReference>
<dbReference type="Gene3D" id="3.30.70.1450">
    <property type="entry name" value="Regulator of K+ conductance, C-terminal domain"/>
    <property type="match status" value="2"/>
</dbReference>
<dbReference type="HAMAP" id="MF_01015">
    <property type="entry name" value="YbjL"/>
    <property type="match status" value="1"/>
</dbReference>
<dbReference type="InterPro" id="IPR050144">
    <property type="entry name" value="AAE_transporter"/>
</dbReference>
<dbReference type="InterPro" id="IPR006037">
    <property type="entry name" value="RCK_C"/>
</dbReference>
<dbReference type="InterPro" id="IPR036721">
    <property type="entry name" value="RCK_C_sf"/>
</dbReference>
<dbReference type="InterPro" id="IPR023017">
    <property type="entry name" value="Transp_YbjL_put"/>
</dbReference>
<dbReference type="InterPro" id="IPR006512">
    <property type="entry name" value="YidE_YbjL"/>
</dbReference>
<dbReference type="NCBIfam" id="NF003440">
    <property type="entry name" value="PRK04972.1"/>
    <property type="match status" value="1"/>
</dbReference>
<dbReference type="NCBIfam" id="TIGR01625">
    <property type="entry name" value="YidE_YbjL_dupl"/>
    <property type="match status" value="2"/>
</dbReference>
<dbReference type="PANTHER" id="PTHR30445">
    <property type="entry name" value="K(+)_H(+) ANTIPORTER SUBUNIT KHTT"/>
    <property type="match status" value="1"/>
</dbReference>
<dbReference type="PANTHER" id="PTHR30445:SF10">
    <property type="entry name" value="TRANSPORT PROTEIN YBJL-RELATED"/>
    <property type="match status" value="1"/>
</dbReference>
<dbReference type="Pfam" id="PF06826">
    <property type="entry name" value="Asp-Al_Ex"/>
    <property type="match status" value="2"/>
</dbReference>
<dbReference type="Pfam" id="PF02080">
    <property type="entry name" value="TrkA_C"/>
    <property type="match status" value="2"/>
</dbReference>
<dbReference type="SUPFAM" id="SSF116726">
    <property type="entry name" value="TrkA C-terminal domain-like"/>
    <property type="match status" value="2"/>
</dbReference>
<dbReference type="PROSITE" id="PS51202">
    <property type="entry name" value="RCK_C"/>
    <property type="match status" value="2"/>
</dbReference>